<name>HP1B3_CHICK</name>
<comment type="function">
    <text evidence="1">Component of heterochromatin that maintains heterochromatin integrity during G1/S progression and regulates the duration of G1 phase to critically influence cell proliferative capacity.</text>
</comment>
<comment type="subcellular location">
    <subcellularLocation>
        <location evidence="1">Nucleus</location>
    </subcellularLocation>
    <subcellularLocation>
        <location evidence="1">Chromosome</location>
    </subcellularLocation>
</comment>
<comment type="domain">
    <text evidence="1">A central region that included the first H15 (linker histone H1/H5 globular) domain binds at the entry/exit site of the nucleosomal DNA.</text>
</comment>
<proteinExistence type="evidence at transcript level"/>
<organism>
    <name type="scientific">Gallus gallus</name>
    <name type="common">Chicken</name>
    <dbReference type="NCBI Taxonomy" id="9031"/>
    <lineage>
        <taxon>Eukaryota</taxon>
        <taxon>Metazoa</taxon>
        <taxon>Chordata</taxon>
        <taxon>Craniata</taxon>
        <taxon>Vertebrata</taxon>
        <taxon>Euteleostomi</taxon>
        <taxon>Archelosauria</taxon>
        <taxon>Archosauria</taxon>
        <taxon>Dinosauria</taxon>
        <taxon>Saurischia</taxon>
        <taxon>Theropoda</taxon>
        <taxon>Coelurosauria</taxon>
        <taxon>Aves</taxon>
        <taxon>Neognathae</taxon>
        <taxon>Galloanserae</taxon>
        <taxon>Galliformes</taxon>
        <taxon>Phasianidae</taxon>
        <taxon>Phasianinae</taxon>
        <taxon>Gallus</taxon>
    </lineage>
</organism>
<accession>Q5ZM33</accession>
<keyword id="KW-0158">Chromosome</keyword>
<keyword id="KW-0238">DNA-binding</keyword>
<keyword id="KW-0539">Nucleus</keyword>
<keyword id="KW-1185">Reference proteome</keyword>
<keyword id="KW-0677">Repeat</keyword>
<gene>
    <name type="primary">HP1BP3</name>
    <name type="ORF">RCJMB04_3f4</name>
</gene>
<feature type="chain" id="PRO_0000339645" description="Heterochromatin protein 1-binding protein 3">
    <location>
        <begin position="1"/>
        <end position="559"/>
    </location>
</feature>
<feature type="domain" description="H15 1" evidence="2">
    <location>
        <begin position="158"/>
        <end position="233"/>
    </location>
</feature>
<feature type="domain" description="H15 2" evidence="2">
    <location>
        <begin position="256"/>
        <end position="331"/>
    </location>
</feature>
<feature type="domain" description="H15 3" evidence="2">
    <location>
        <begin position="339"/>
        <end position="414"/>
    </location>
</feature>
<feature type="region of interest" description="Disordered" evidence="3">
    <location>
        <begin position="1"/>
        <end position="132"/>
    </location>
</feature>
<feature type="region of interest" description="Disordered" evidence="3">
    <location>
        <begin position="421"/>
        <end position="559"/>
    </location>
</feature>
<feature type="short sequence motif" description="PxVxL motif" evidence="1">
    <location>
        <begin position="256"/>
        <end position="260"/>
    </location>
</feature>
<feature type="compositionally biased region" description="Basic and acidic residues" evidence="3">
    <location>
        <begin position="51"/>
        <end position="68"/>
    </location>
</feature>
<feature type="compositionally biased region" description="Basic and acidic residues" evidence="3">
    <location>
        <begin position="96"/>
        <end position="128"/>
    </location>
</feature>
<feature type="compositionally biased region" description="Acidic residues" evidence="3">
    <location>
        <begin position="429"/>
        <end position="459"/>
    </location>
</feature>
<feature type="compositionally biased region" description="Basic residues" evidence="3">
    <location>
        <begin position="463"/>
        <end position="515"/>
    </location>
</feature>
<feature type="compositionally biased region" description="Low complexity" evidence="3">
    <location>
        <begin position="516"/>
        <end position="533"/>
    </location>
</feature>
<feature type="compositionally biased region" description="Basic residues" evidence="3">
    <location>
        <begin position="549"/>
        <end position="559"/>
    </location>
</feature>
<dbReference type="EMBL" id="AJ719551">
    <property type="protein sequence ID" value="CAG31210.1"/>
    <property type="molecule type" value="mRNA"/>
</dbReference>
<dbReference type="RefSeq" id="NP_001006560.1">
    <property type="nucleotide sequence ID" value="NM_001006560.1"/>
</dbReference>
<dbReference type="SMR" id="Q5ZM33"/>
<dbReference type="FunCoup" id="Q5ZM33">
    <property type="interactions" value="2165"/>
</dbReference>
<dbReference type="STRING" id="9031.ENSGALP00000016363"/>
<dbReference type="PaxDb" id="9031-ENSGALP00000016363"/>
<dbReference type="GeneID" id="425543"/>
<dbReference type="KEGG" id="gga:425543"/>
<dbReference type="CTD" id="50809"/>
<dbReference type="VEuPathDB" id="HostDB:geneid_425543"/>
<dbReference type="eggNOG" id="KOG4012">
    <property type="taxonomic scope" value="Eukaryota"/>
</dbReference>
<dbReference type="InParanoid" id="Q5ZM33"/>
<dbReference type="OrthoDB" id="7684689at2759"/>
<dbReference type="PhylomeDB" id="Q5ZM33"/>
<dbReference type="PRO" id="PR:Q5ZM33"/>
<dbReference type="Proteomes" id="UP000000539">
    <property type="component" value="Unassembled WGS sequence"/>
</dbReference>
<dbReference type="GO" id="GO:0005694">
    <property type="term" value="C:chromosome"/>
    <property type="evidence" value="ECO:0000318"/>
    <property type="project" value="GO_Central"/>
</dbReference>
<dbReference type="GO" id="GO:0000786">
    <property type="term" value="C:nucleosome"/>
    <property type="evidence" value="ECO:0007669"/>
    <property type="project" value="InterPro"/>
</dbReference>
<dbReference type="GO" id="GO:0005634">
    <property type="term" value="C:nucleus"/>
    <property type="evidence" value="ECO:0000318"/>
    <property type="project" value="GO_Central"/>
</dbReference>
<dbReference type="GO" id="GO:0003677">
    <property type="term" value="F:DNA binding"/>
    <property type="evidence" value="ECO:0000318"/>
    <property type="project" value="GO_Central"/>
</dbReference>
<dbReference type="GO" id="GO:0031491">
    <property type="term" value="F:nucleosome binding"/>
    <property type="evidence" value="ECO:0000318"/>
    <property type="project" value="GO_Central"/>
</dbReference>
<dbReference type="GO" id="GO:0070828">
    <property type="term" value="P:heterochromatin organization"/>
    <property type="evidence" value="ECO:0000318"/>
    <property type="project" value="GO_Central"/>
</dbReference>
<dbReference type="GO" id="GO:0006334">
    <property type="term" value="P:nucleosome assembly"/>
    <property type="evidence" value="ECO:0007669"/>
    <property type="project" value="InterPro"/>
</dbReference>
<dbReference type="CDD" id="cd00073">
    <property type="entry name" value="H15"/>
    <property type="match status" value="1"/>
</dbReference>
<dbReference type="FunFam" id="1.10.10.10:FF:000228">
    <property type="entry name" value="heterochromatin protein 1-binding protein 3 isoform X1"/>
    <property type="match status" value="1"/>
</dbReference>
<dbReference type="FunFam" id="1.10.10.10:FF:000276">
    <property type="entry name" value="heterochromatin protein 1-binding protein 3 isoform X1"/>
    <property type="match status" value="1"/>
</dbReference>
<dbReference type="Gene3D" id="1.10.10.10">
    <property type="entry name" value="Winged helix-like DNA-binding domain superfamily/Winged helix DNA-binding domain"/>
    <property type="match status" value="3"/>
</dbReference>
<dbReference type="InterPro" id="IPR005818">
    <property type="entry name" value="Histone_H1/H5_H15"/>
</dbReference>
<dbReference type="InterPro" id="IPR036388">
    <property type="entry name" value="WH-like_DNA-bd_sf"/>
</dbReference>
<dbReference type="InterPro" id="IPR036390">
    <property type="entry name" value="WH_DNA-bd_sf"/>
</dbReference>
<dbReference type="PANTHER" id="PTHR15832:SF1">
    <property type="entry name" value="HETEROCHROMATIN PROTEIN 1-BINDING PROTEIN 3"/>
    <property type="match status" value="1"/>
</dbReference>
<dbReference type="PANTHER" id="PTHR15832">
    <property type="entry name" value="SHC (SRC HOMOLOGY DOMAIN C-TERMINAL) ADAPTOR HOMOLOG"/>
    <property type="match status" value="1"/>
</dbReference>
<dbReference type="Pfam" id="PF00538">
    <property type="entry name" value="Linker_histone"/>
    <property type="match status" value="3"/>
</dbReference>
<dbReference type="SMART" id="SM00526">
    <property type="entry name" value="H15"/>
    <property type="match status" value="3"/>
</dbReference>
<dbReference type="SUPFAM" id="SSF46785">
    <property type="entry name" value="Winged helix' DNA-binding domain"/>
    <property type="match status" value="3"/>
</dbReference>
<dbReference type="PROSITE" id="PS51504">
    <property type="entry name" value="H15"/>
    <property type="match status" value="3"/>
</dbReference>
<sequence length="559" mass="61851">MATDLSEAEPVHHKALPLLTGTQLIHTDKLSEKAEDDTMPIRRSVNSSRETPPKSKPAEGGEEVKADAEATSEESASAGEEQENETLPAAAPSEAEQPKEPENEEKGETKSSVETKKDDKDQSKEKEKKVKKTIPAWATLSASQLARAQKQTQMAATSRPKMDAILTEAIKACFQKSGASVVAIRKYIIHKYPSLELERRGYLLKQALKRELERGIIRQVKGKGASGSFVVVSNAGKTVQKARDRKKSTSVSTPEQQVKLEDILPLAFTRLCEPKEASYSLIKKYVSQYYPKLKVDIRPQLLKNALQRAVEKGQLEQITGKGASGTFQLKKSGEKPLLGGTLMEDAILSAIAAMNEPKTCSTTALKKYILENHPGTNSNFQVHLLKRTLQRCEKNGWLEQISGKGFSGTFQLCFPYYPSPDVLYPEKQQDEDSEESQEEEEEESEEEEESEEEESEEEEPPPKKRMQKRPPPKSRSRAPPMKRRESKPKPRKTPAAHQGKAKPPPKVKTPVKKAKPAAPAIKKPSGGSSSKKPTASGRKEVKPSAKGKSAMRKSLRAKK</sequence>
<protein>
    <recommendedName>
        <fullName>Heterochromatin protein 1-binding protein 3</fullName>
    </recommendedName>
</protein>
<evidence type="ECO:0000250" key="1">
    <source>
        <dbReference type="UniProtKB" id="Q5SSJ5"/>
    </source>
</evidence>
<evidence type="ECO:0000255" key="2">
    <source>
        <dbReference type="PROSITE-ProRule" id="PRU00837"/>
    </source>
</evidence>
<evidence type="ECO:0000256" key="3">
    <source>
        <dbReference type="SAM" id="MobiDB-lite"/>
    </source>
</evidence>
<reference key="1">
    <citation type="journal article" date="2005" name="Genome Biol.">
        <title>Full-length cDNAs from chicken bursal lymphocytes to facilitate gene function analysis.</title>
        <authorList>
            <person name="Caldwell R.B."/>
            <person name="Kierzek A.M."/>
            <person name="Arakawa H."/>
            <person name="Bezzubov Y."/>
            <person name="Zaim J."/>
            <person name="Fiedler P."/>
            <person name="Kutter S."/>
            <person name="Blagodatski A."/>
            <person name="Kostovska D."/>
            <person name="Koter M."/>
            <person name="Plachy J."/>
            <person name="Carninci P."/>
            <person name="Hayashizaki Y."/>
            <person name="Buerstedde J.-M."/>
        </authorList>
    </citation>
    <scope>NUCLEOTIDE SEQUENCE [LARGE SCALE MRNA]</scope>
    <source>
        <strain>CB</strain>
        <tissue>Bursa of Fabricius</tissue>
    </source>
</reference>